<keyword id="KW-0150">Chloroplast</keyword>
<keyword id="KW-0456">Lyase</keyword>
<keyword id="KW-0460">Magnesium</keyword>
<keyword id="KW-0479">Metal-binding</keyword>
<keyword id="KW-0934">Plastid</keyword>
<keyword id="KW-0809">Transit peptide</keyword>
<protein>
    <recommendedName>
        <fullName evidence="6">Linalool synthase Tps-5031L19, chloroplastic</fullName>
        <shortName evidence="6">PsTps-5031L</shortName>
        <ecNumber evidence="5">4.2.3.-</ecNumber>
    </recommendedName>
</protein>
<reference key="1">
    <citation type="journal article" date="2010" name="Phytochemistry">
        <title>Geraniol and linalool synthases from wild species of perilla.</title>
        <authorList>
            <person name="Masumoto N."/>
            <person name="Korin M."/>
            <person name="Ito M."/>
        </authorList>
    </citation>
    <scope>NUCLEOTIDE SEQUENCE [MRNA]</scope>
    <scope>FUNCTION</scope>
    <scope>CATALYTIC ACTIVITY</scope>
    <scope>PATHWAY</scope>
    <scope>COFACTOR</scope>
    <source>
        <strain>cv. 5031</strain>
    </source>
</reference>
<accession>C0KWV3</accession>
<sequence>MSSMRTYVAIMKKPSVEHVDNVDKKASKPSWRVSLSAGLRSSCSLQLEVKPADQILTARRSGNYQPSLWDFNYLQSLNTTHYKEVRHLKREAELIEQVKMLLEEEMEAVQQLELVDDLKNLGLSYFFEDQIKQILTFIYNEHKCFHSNSIIEAEEIRDLYFTALGFRLLRQHGFQISQEVFDCFKNEEGSDFKARLGDDTKGLLQLYEASFLLREGEDTLELARQYATKFLQKKVDHELIDDNNLLSWILHSLEIPLHWRIQRLEARWFLDAYASRRDMNQIILELAKLDFNIIQATQQEELKDLSRWWKSSCLAEKLPFVRDRLVESYFWAIALFEPHQYGYHRKIAAKIITLITSLDDVYDIYGTLDELQLFTDAIQRWDTESISRLPYYMQLFYMVLYNFVPRLAYDGLKEKGFITIPYLQRSWADLVEAYLKEAKWYYNGYTPSMEEYLNNAYISIGATPVISQVFFTLATSIDKPVIDSLYEYHRILRLSGILVRLPDDLGTSPFEMKRGDVPKAIQLYMKERNATEIEAQEHVRFLIREAWKEMNTATAAVDCPFTDDLVTAAANLGRAAQFMYLDGDGNHSQLHQRIACLLFEPYA</sequence>
<organism>
    <name type="scientific">Perilla frutescens var. hirtella</name>
    <name type="common">Perilla citriodora</name>
    <name type="synonym">Perilla setoyensis</name>
    <dbReference type="NCBI Taxonomy" id="608512"/>
    <lineage>
        <taxon>Eukaryota</taxon>
        <taxon>Viridiplantae</taxon>
        <taxon>Streptophyta</taxon>
        <taxon>Embryophyta</taxon>
        <taxon>Tracheophyta</taxon>
        <taxon>Spermatophyta</taxon>
        <taxon>Magnoliopsida</taxon>
        <taxon>eudicotyledons</taxon>
        <taxon>Gunneridae</taxon>
        <taxon>Pentapetalae</taxon>
        <taxon>asterids</taxon>
        <taxon>lamiids</taxon>
        <taxon>Lamiales</taxon>
        <taxon>Lamiaceae</taxon>
        <taxon>Nepetoideae</taxon>
        <taxon>Elsholtzieae</taxon>
        <taxon>Perilla</taxon>
    </lineage>
</organism>
<proteinExistence type="evidence at protein level"/>
<dbReference type="EC" id="4.2.3.-" evidence="5"/>
<dbReference type="EMBL" id="FJ644544">
    <property type="protein sequence ID" value="ACN42009.1"/>
    <property type="molecule type" value="mRNA"/>
</dbReference>
<dbReference type="SMR" id="C0KWV3"/>
<dbReference type="BRENDA" id="4.2.3.25">
    <property type="organism ID" value="11840"/>
</dbReference>
<dbReference type="UniPathway" id="UPA00213"/>
<dbReference type="GO" id="GO:0009507">
    <property type="term" value="C:chloroplast"/>
    <property type="evidence" value="ECO:0007669"/>
    <property type="project" value="UniProtKB-SubCell"/>
</dbReference>
<dbReference type="GO" id="GO:0000287">
    <property type="term" value="F:magnesium ion binding"/>
    <property type="evidence" value="ECO:0007669"/>
    <property type="project" value="InterPro"/>
</dbReference>
<dbReference type="GO" id="GO:0010333">
    <property type="term" value="F:terpene synthase activity"/>
    <property type="evidence" value="ECO:0007669"/>
    <property type="project" value="InterPro"/>
</dbReference>
<dbReference type="GO" id="GO:0016102">
    <property type="term" value="P:diterpenoid biosynthetic process"/>
    <property type="evidence" value="ECO:0007669"/>
    <property type="project" value="InterPro"/>
</dbReference>
<dbReference type="GO" id="GO:0016099">
    <property type="term" value="P:monoterpenoid biosynthetic process"/>
    <property type="evidence" value="ECO:0000314"/>
    <property type="project" value="UniProtKB"/>
</dbReference>
<dbReference type="CDD" id="cd00684">
    <property type="entry name" value="Terpene_cyclase_plant_C1"/>
    <property type="match status" value="1"/>
</dbReference>
<dbReference type="FunFam" id="1.10.600.10:FF:000007">
    <property type="entry name" value="Isoprene synthase, chloroplastic"/>
    <property type="match status" value="1"/>
</dbReference>
<dbReference type="FunFam" id="1.50.10.130:FF:000001">
    <property type="entry name" value="Isoprene synthase, chloroplastic"/>
    <property type="match status" value="1"/>
</dbReference>
<dbReference type="Gene3D" id="1.10.600.10">
    <property type="entry name" value="Farnesyl Diphosphate Synthase"/>
    <property type="match status" value="1"/>
</dbReference>
<dbReference type="Gene3D" id="1.50.10.130">
    <property type="entry name" value="Terpene synthase, N-terminal domain"/>
    <property type="match status" value="1"/>
</dbReference>
<dbReference type="InterPro" id="IPR008949">
    <property type="entry name" value="Isoprenoid_synthase_dom_sf"/>
</dbReference>
<dbReference type="InterPro" id="IPR034741">
    <property type="entry name" value="Terpene_cyclase-like_1_C"/>
</dbReference>
<dbReference type="InterPro" id="IPR044814">
    <property type="entry name" value="Terpene_cyclase_plant_C1"/>
</dbReference>
<dbReference type="InterPro" id="IPR001906">
    <property type="entry name" value="Terpene_synth_N"/>
</dbReference>
<dbReference type="InterPro" id="IPR036965">
    <property type="entry name" value="Terpene_synth_N_sf"/>
</dbReference>
<dbReference type="InterPro" id="IPR050148">
    <property type="entry name" value="Terpene_synthase-like"/>
</dbReference>
<dbReference type="InterPro" id="IPR005630">
    <property type="entry name" value="Terpene_synthase_metal-bd"/>
</dbReference>
<dbReference type="InterPro" id="IPR008930">
    <property type="entry name" value="Terpenoid_cyclase/PrenylTrfase"/>
</dbReference>
<dbReference type="PANTHER" id="PTHR31225">
    <property type="entry name" value="OS04G0344100 PROTEIN-RELATED"/>
    <property type="match status" value="1"/>
</dbReference>
<dbReference type="PANTHER" id="PTHR31225:SF9">
    <property type="entry name" value="TERPENE SYNTHASE 10"/>
    <property type="match status" value="1"/>
</dbReference>
<dbReference type="Pfam" id="PF01397">
    <property type="entry name" value="Terpene_synth"/>
    <property type="match status" value="1"/>
</dbReference>
<dbReference type="Pfam" id="PF03936">
    <property type="entry name" value="Terpene_synth_C"/>
    <property type="match status" value="1"/>
</dbReference>
<dbReference type="SFLD" id="SFLDG01019">
    <property type="entry name" value="Terpene_Cyclase_Like_1_C_Termi"/>
    <property type="match status" value="1"/>
</dbReference>
<dbReference type="SFLD" id="SFLDG01604">
    <property type="entry name" value="Terpene_Cyclase_Like_1_C_Termi"/>
    <property type="match status" value="1"/>
</dbReference>
<dbReference type="SFLD" id="SFLDG01014">
    <property type="entry name" value="Terpene_Cyclase_Like_1_N-term"/>
    <property type="match status" value="1"/>
</dbReference>
<dbReference type="SUPFAM" id="SSF48239">
    <property type="entry name" value="Terpenoid cyclases/Protein prenyltransferases"/>
    <property type="match status" value="1"/>
</dbReference>
<dbReference type="SUPFAM" id="SSF48576">
    <property type="entry name" value="Terpenoid synthases"/>
    <property type="match status" value="1"/>
</dbReference>
<comment type="function">
    <text evidence="5">Monoterpene synthase (mono-TPS) involved in the biosynthesis of monoterpenes natural products (PubMed:20447664). Catalyzes the conversion of (2E)-geranyl diphosphate (GPP) into linalool (PubMed:20447664).</text>
</comment>
<comment type="catalytic activity">
    <reaction evidence="5">
        <text>(2E)-geranyl diphosphate + H2O = linalool + diphosphate</text>
        <dbReference type="Rhea" id="RHEA:68708"/>
        <dbReference type="ChEBI" id="CHEBI:15377"/>
        <dbReference type="ChEBI" id="CHEBI:17580"/>
        <dbReference type="ChEBI" id="CHEBI:33019"/>
        <dbReference type="ChEBI" id="CHEBI:58057"/>
    </reaction>
    <physiologicalReaction direction="left-to-right" evidence="5">
        <dbReference type="Rhea" id="RHEA:68709"/>
    </physiologicalReaction>
</comment>
<comment type="cofactor">
    <cofactor evidence="5">
        <name>Mg(2+)</name>
        <dbReference type="ChEBI" id="CHEBI:18420"/>
    </cofactor>
    <cofactor evidence="5">
        <name>Mn(2+)</name>
        <dbReference type="ChEBI" id="CHEBI:29035"/>
    </cofactor>
    <text evidence="1">Binds 3 Mg(2+) or Mn(2+) ions per subunit.</text>
</comment>
<comment type="pathway">
    <text evidence="5">Secondary metabolite biosynthesis; terpenoid biosynthesis.</text>
</comment>
<comment type="subunit">
    <text evidence="3">Monomer.</text>
</comment>
<comment type="subcellular location">
    <subcellularLocation>
        <location evidence="4">Plastid</location>
        <location evidence="4">Chloroplast</location>
    </subcellularLocation>
</comment>
<comment type="domain">
    <text evidence="7">The Asp-Asp-Xaa-Xaa-Asp/Glu (DDXXD/E) motif is important for the catalytic activity, presumably through binding to Mg(2+).</text>
</comment>
<comment type="similarity">
    <text evidence="7">Belongs to the terpene synthase family. Tpsb subfamily.</text>
</comment>
<gene>
    <name evidence="6" type="primary">Tps-5031L19</name>
</gene>
<name>LNOLS_PERFH</name>
<evidence type="ECO:0000250" key="1">
    <source>
        <dbReference type="UniProtKB" id="A0A1C9J6A7"/>
    </source>
</evidence>
<evidence type="ECO:0000250" key="2">
    <source>
        <dbReference type="UniProtKB" id="Q40577"/>
    </source>
</evidence>
<evidence type="ECO:0000250" key="3">
    <source>
        <dbReference type="UniProtKB" id="Q6JD73"/>
    </source>
</evidence>
<evidence type="ECO:0000255" key="4"/>
<evidence type="ECO:0000269" key="5">
    <source>
    </source>
</evidence>
<evidence type="ECO:0000303" key="6">
    <source>
    </source>
</evidence>
<evidence type="ECO:0000305" key="7"/>
<feature type="transit peptide" description="Chloroplast" evidence="4">
    <location>
        <begin position="1"/>
        <end position="36"/>
    </location>
</feature>
<feature type="chain" id="PRO_0000455252" description="Linalool synthase Tps-5031L19, chloroplastic">
    <location>
        <begin position="37"/>
        <end position="603"/>
    </location>
</feature>
<feature type="short sequence motif" description="DDXXD motif" evidence="7">
    <location>
        <begin position="359"/>
        <end position="363"/>
    </location>
</feature>
<feature type="binding site" evidence="2">
    <location>
        <position position="322"/>
    </location>
    <ligand>
        <name>(2E)-geranyl diphosphate</name>
        <dbReference type="ChEBI" id="CHEBI:58057"/>
    </ligand>
</feature>
<feature type="binding site" evidence="2">
    <location>
        <position position="359"/>
    </location>
    <ligand>
        <name>(2E)-geranyl diphosphate</name>
        <dbReference type="ChEBI" id="CHEBI:58057"/>
    </ligand>
</feature>
<feature type="binding site" evidence="2">
    <location>
        <position position="359"/>
    </location>
    <ligand>
        <name>Mg(2+)</name>
        <dbReference type="ChEBI" id="CHEBI:18420"/>
        <label>1</label>
    </ligand>
</feature>
<feature type="binding site" evidence="2">
    <location>
        <position position="359"/>
    </location>
    <ligand>
        <name>Mg(2+)</name>
        <dbReference type="ChEBI" id="CHEBI:18420"/>
        <label>2</label>
    </ligand>
</feature>
<feature type="binding site" evidence="2">
    <location>
        <position position="363"/>
    </location>
    <ligand>
        <name>(2E)-geranyl diphosphate</name>
        <dbReference type="ChEBI" id="CHEBI:58057"/>
    </ligand>
</feature>
<feature type="binding site" evidence="2">
    <location>
        <position position="363"/>
    </location>
    <ligand>
        <name>Mg(2+)</name>
        <dbReference type="ChEBI" id="CHEBI:18420"/>
        <label>1</label>
    </ligand>
</feature>
<feature type="binding site" evidence="2">
    <location>
        <position position="363"/>
    </location>
    <ligand>
        <name>Mg(2+)</name>
        <dbReference type="ChEBI" id="CHEBI:18420"/>
        <label>2</label>
    </ligand>
</feature>
<feature type="binding site" evidence="2">
    <location>
        <position position="500"/>
    </location>
    <ligand>
        <name>(2E)-geranyl diphosphate</name>
        <dbReference type="ChEBI" id="CHEBI:58057"/>
    </ligand>
</feature>
<feature type="binding site" evidence="2">
    <location>
        <position position="503"/>
    </location>
    <ligand>
        <name>(2E)-geranyl diphosphate</name>
        <dbReference type="ChEBI" id="CHEBI:58057"/>
    </ligand>
</feature>
<feature type="binding site" evidence="2">
    <location>
        <position position="503"/>
    </location>
    <ligand>
        <name>Mg(2+)</name>
        <dbReference type="ChEBI" id="CHEBI:18420"/>
        <label>3</label>
    </ligand>
</feature>
<feature type="binding site" evidence="2">
    <location>
        <position position="507"/>
    </location>
    <ligand>
        <name>Mg(2+)</name>
        <dbReference type="ChEBI" id="CHEBI:18420"/>
        <label>3</label>
    </ligand>
</feature>
<feature type="binding site" evidence="2">
    <location>
        <position position="511"/>
    </location>
    <ligand>
        <name>Mg(2+)</name>
        <dbReference type="ChEBI" id="CHEBI:18420"/>
        <label>3</label>
    </ligand>
</feature>